<evidence type="ECO:0000255" key="1">
    <source>
        <dbReference type="PROSITE-ProRule" id="PRU00487"/>
    </source>
</evidence>
<evidence type="ECO:0000269" key="2">
    <source>
    </source>
</evidence>
<evidence type="ECO:0000269" key="3">
    <source>
    </source>
</evidence>
<evidence type="ECO:0000303" key="4">
    <source>
    </source>
</evidence>
<evidence type="ECO:0000303" key="5">
    <source>
    </source>
</evidence>
<evidence type="ECO:0000305" key="6"/>
<evidence type="ECO:0000305" key="7">
    <source>
    </source>
</evidence>
<keyword id="KW-0378">Hydrolase</keyword>
<keyword id="KW-0418">Kinase</keyword>
<keyword id="KW-0597">Phosphoprotein</keyword>
<keyword id="KW-1185">Reference proteome</keyword>
<keyword id="KW-0677">Repeat</keyword>
<keyword id="KW-0808">Transferase</keyword>
<protein>
    <recommendedName>
        <fullName evidence="4">Circadian clock protein KaiC2</fullName>
        <ecNumber evidence="7">2.7.11.1</ecNumber>
        <ecNumber evidence="6">3.6.4.-</ecNumber>
    </recommendedName>
</protein>
<accession>P73860</accession>
<comment type="function">
    <text evidence="2">Autophosphorylates independently of KaiA.</text>
</comment>
<comment type="catalytic activity">
    <reaction evidence="7">
        <text>L-seryl-[protein] + ATP = O-phospho-L-seryl-[protein] + ADP + H(+)</text>
        <dbReference type="Rhea" id="RHEA:17989"/>
        <dbReference type="Rhea" id="RHEA-COMP:9863"/>
        <dbReference type="Rhea" id="RHEA-COMP:11604"/>
        <dbReference type="ChEBI" id="CHEBI:15378"/>
        <dbReference type="ChEBI" id="CHEBI:29999"/>
        <dbReference type="ChEBI" id="CHEBI:30616"/>
        <dbReference type="ChEBI" id="CHEBI:83421"/>
        <dbReference type="ChEBI" id="CHEBI:456216"/>
        <dbReference type="EC" id="2.7.11.1"/>
    </reaction>
    <physiologicalReaction direction="left-to-right" evidence="7">
        <dbReference type="Rhea" id="RHEA:17990"/>
    </physiologicalReaction>
</comment>
<comment type="catalytic activity">
    <reaction evidence="7">
        <text>L-threonyl-[protein] + ATP = O-phospho-L-threonyl-[protein] + ADP + H(+)</text>
        <dbReference type="Rhea" id="RHEA:46608"/>
        <dbReference type="Rhea" id="RHEA-COMP:11060"/>
        <dbReference type="Rhea" id="RHEA-COMP:11605"/>
        <dbReference type="ChEBI" id="CHEBI:15378"/>
        <dbReference type="ChEBI" id="CHEBI:30013"/>
        <dbReference type="ChEBI" id="CHEBI:30616"/>
        <dbReference type="ChEBI" id="CHEBI:61977"/>
        <dbReference type="ChEBI" id="CHEBI:456216"/>
        <dbReference type="EC" id="2.7.11.1"/>
    </reaction>
    <physiologicalReaction direction="left-to-right" evidence="7">
        <dbReference type="Rhea" id="RHEA:46609"/>
    </physiologicalReaction>
</comment>
<comment type="catalytic activity">
    <reaction evidence="6">
        <text>ATP + H2O = ADP + phosphate + H(+)</text>
        <dbReference type="Rhea" id="RHEA:13065"/>
        <dbReference type="ChEBI" id="CHEBI:15377"/>
        <dbReference type="ChEBI" id="CHEBI:15378"/>
        <dbReference type="ChEBI" id="CHEBI:30616"/>
        <dbReference type="ChEBI" id="CHEBI:43474"/>
        <dbReference type="ChEBI" id="CHEBI:456216"/>
    </reaction>
</comment>
<comment type="subunit">
    <text evidence="2">Multimerizes, probably forming homohexamers, no interaction with KaiC1 or KaiC3 is seen.</text>
</comment>
<comment type="domain">
    <text evidence="6">In the homohexamer the 2 domains (called CI and CII) self-associate to each form a 'donut' layer; the compactness and local conformation of the domains varies over the cell cycle and impacts function. CII has the autokinase and autophosphatase activities, both CI and CII have (weak) ATPase activity.</text>
</comment>
<comment type="disruption phenotype">
    <text evidence="3">A kaiB2-kaiC2 deletion mutant cannot be made.</text>
</comment>
<comment type="similarity">
    <text evidence="6">Belongs to the KaiC family.</text>
</comment>
<reference key="1">
    <citation type="journal article" date="1996" name="DNA Res.">
        <title>Sequence analysis of the genome of the unicellular cyanobacterium Synechocystis sp. strain PCC6803. II. Sequence determination of the entire genome and assignment of potential protein-coding regions.</title>
        <authorList>
            <person name="Kaneko T."/>
            <person name="Sato S."/>
            <person name="Kotani H."/>
            <person name="Tanaka A."/>
            <person name="Asamizu E."/>
            <person name="Nakamura Y."/>
            <person name="Miyajima N."/>
            <person name="Hirosawa M."/>
            <person name="Sugiura M."/>
            <person name="Sasamoto S."/>
            <person name="Kimura T."/>
            <person name="Hosouchi T."/>
            <person name="Matsuno A."/>
            <person name="Muraki A."/>
            <person name="Nakazaki N."/>
            <person name="Naruo K."/>
            <person name="Okumura S."/>
            <person name="Shimpo S."/>
            <person name="Takeuchi C."/>
            <person name="Wada T."/>
            <person name="Watanabe A."/>
            <person name="Yamada M."/>
            <person name="Yasuda M."/>
            <person name="Tabata S."/>
        </authorList>
    </citation>
    <scope>NUCLEOTIDE SEQUENCE [LARGE SCALE GENOMIC DNA]</scope>
    <source>
        <strain>ATCC 27184 / PCC 6803 / Kazusa</strain>
    </source>
</reference>
<reference key="2">
    <citation type="journal article" date="2013" name="Microbiology">
        <title>Biochemical analysis of three putative KaiC clock proteins from Synechocystis sp. PCC 6803 suggests their functional divergence.</title>
        <authorList>
            <person name="Wiegard A."/>
            <person name="Doerrich A.K."/>
            <person name="Deinzer H.T."/>
            <person name="Beck C."/>
            <person name="Wilde A."/>
            <person name="Holtzendorff J."/>
            <person name="Axmann I.M."/>
        </authorList>
    </citation>
    <scope>PROBABLE PROTEIN KINASE CATALYTIC ACTIVITY</scope>
    <scope>AUTOPHOSPHORYLATION ACTIVITY</scope>
    <scope>SUBUNIT</scope>
    <scope>PUTATIVE PHOSPHORYLATION AT SER-423 AND SER-424</scope>
    <source>
        <strain>ATCC 27184 / PCC 6803 / Kazusa</strain>
    </source>
</reference>
<reference key="3">
    <citation type="journal article" date="2014" name="Microbiology">
        <title>Deletion of the Synechocystis sp. PCC 6803 kaiAB1C1 gene cluster causes impaired cell growth under light-dark conditions.</title>
        <authorList>
            <person name="Doerrich A.K."/>
            <person name="Mitschke J."/>
            <person name="Siadat O."/>
            <person name="Wilde A."/>
        </authorList>
    </citation>
    <scope>DISRUPTION PHENOTYPE</scope>
    <source>
        <strain>ATCC 27184 / PCC 6803 / Kazusa</strain>
    </source>
</reference>
<sequence>MTDNSQSLSLIKCPTGIQGFDEITNGGLPQGRPTLICGSAGCGKTLFGVEFLVRGAVEYGEPGVLVSFEESAKEIIQNVASLGWNLQDLVAEEKILIDHIYVEASEIQETGEYDLEALFIRLGYAINKIGAKRILLDTIEVLFSGLENTNIVRAELRRLFHWLKQKGVTAVITGERGDKNLTRQGLEEYVSDCVIKLDQKTVEEVATRTIQVVKYRGSRHSNNEYPFLIEENGISVLPITSLILNHSVSQERISTGIPQLDDMFGGQGYYRGSSILVTGRAGTGKTTLAAFFAQATCLRGERCLYLATEESPQQICRNLNSIGLDLSPYLDSQLLQFDATRPTNYNLEMRLFKIHSWVRNFKPSLVVVDPMSNLITSGNLNQTKNFFMRLIDYLKSQKITVFLTDLTGGNVGYDNEQTEVGVSSLMDTWLELQTLRINGERNRILYILKSRGMAHSNQVREFILSNDGVDLIEAYIGEGQVLTGTQRINQILEEEAIAKRRQQALELSKRNFERKKYLLQAKIDALQMKLASQDEELEVLMLEEKEFKQTMLANRNLIKKSRHIYQNP</sequence>
<name>KAIC2_SYNY3</name>
<dbReference type="EC" id="2.7.11.1" evidence="7"/>
<dbReference type="EC" id="3.6.4.-" evidence="6"/>
<dbReference type="EMBL" id="BA000022">
    <property type="protein sequence ID" value="BAA17922.1"/>
    <property type="molecule type" value="Genomic_DNA"/>
</dbReference>
<dbReference type="PIR" id="S75060">
    <property type="entry name" value="S75060"/>
</dbReference>
<dbReference type="SMR" id="P73860"/>
<dbReference type="IntAct" id="P73860">
    <property type="interactions" value="2"/>
</dbReference>
<dbReference type="STRING" id="1148.gene:10498791"/>
<dbReference type="iPTMnet" id="P73860"/>
<dbReference type="PaxDb" id="1148-1653005"/>
<dbReference type="EnsemblBacteria" id="BAA17922">
    <property type="protein sequence ID" value="BAA17922"/>
    <property type="gene ID" value="BAA17922"/>
</dbReference>
<dbReference type="KEGG" id="syn:sll1595"/>
<dbReference type="eggNOG" id="COG0467">
    <property type="taxonomic scope" value="Bacteria"/>
</dbReference>
<dbReference type="InParanoid" id="P73860"/>
<dbReference type="PhylomeDB" id="P73860"/>
<dbReference type="Proteomes" id="UP000001425">
    <property type="component" value="Chromosome"/>
</dbReference>
<dbReference type="GO" id="GO:0005524">
    <property type="term" value="F:ATP binding"/>
    <property type="evidence" value="ECO:0007669"/>
    <property type="project" value="InterPro"/>
</dbReference>
<dbReference type="GO" id="GO:0016887">
    <property type="term" value="F:ATP hydrolysis activity"/>
    <property type="evidence" value="ECO:0007669"/>
    <property type="project" value="InterPro"/>
</dbReference>
<dbReference type="GO" id="GO:0016301">
    <property type="term" value="F:kinase activity"/>
    <property type="evidence" value="ECO:0007669"/>
    <property type="project" value="UniProtKB-KW"/>
</dbReference>
<dbReference type="CDD" id="cd19485">
    <property type="entry name" value="KaiC-N"/>
    <property type="match status" value="1"/>
</dbReference>
<dbReference type="CDD" id="cd19484">
    <property type="entry name" value="KaiC_C"/>
    <property type="match status" value="1"/>
</dbReference>
<dbReference type="Gene3D" id="3.40.50.300">
    <property type="entry name" value="P-loop containing nucleotide triphosphate hydrolases"/>
    <property type="match status" value="2"/>
</dbReference>
<dbReference type="InterPro" id="IPR003593">
    <property type="entry name" value="AAA+_ATPase"/>
</dbReference>
<dbReference type="InterPro" id="IPR051347">
    <property type="entry name" value="Circadian_clock_KaiC-rel"/>
</dbReference>
<dbReference type="InterPro" id="IPR030665">
    <property type="entry name" value="KaiC"/>
</dbReference>
<dbReference type="InterPro" id="IPR014774">
    <property type="entry name" value="KaiC-like_dom"/>
</dbReference>
<dbReference type="InterPro" id="IPR047222">
    <property type="entry name" value="KaiC_C"/>
</dbReference>
<dbReference type="InterPro" id="IPR010624">
    <property type="entry name" value="KaiC_dom"/>
</dbReference>
<dbReference type="InterPro" id="IPR047221">
    <property type="entry name" value="KaiC_N"/>
</dbReference>
<dbReference type="InterPro" id="IPR027417">
    <property type="entry name" value="P-loop_NTPase"/>
</dbReference>
<dbReference type="NCBIfam" id="NF006799">
    <property type="entry name" value="PRK09302.1"/>
    <property type="match status" value="1"/>
</dbReference>
<dbReference type="PANTHER" id="PTHR42926">
    <property type="match status" value="1"/>
</dbReference>
<dbReference type="PANTHER" id="PTHR42926:SF1">
    <property type="entry name" value="CIRCADIAN CLOCK OSCILLATOR PROTEIN KAIC 1"/>
    <property type="match status" value="1"/>
</dbReference>
<dbReference type="Pfam" id="PF06745">
    <property type="entry name" value="ATPase"/>
    <property type="match status" value="2"/>
</dbReference>
<dbReference type="PIRSF" id="PIRSF039117">
    <property type="entry name" value="KaiC"/>
    <property type="match status" value="1"/>
</dbReference>
<dbReference type="SMART" id="SM00382">
    <property type="entry name" value="AAA"/>
    <property type="match status" value="2"/>
</dbReference>
<dbReference type="SUPFAM" id="SSF52540">
    <property type="entry name" value="P-loop containing nucleoside triphosphate hydrolases"/>
    <property type="match status" value="2"/>
</dbReference>
<dbReference type="PROSITE" id="PS51146">
    <property type="entry name" value="KAIC"/>
    <property type="match status" value="2"/>
</dbReference>
<feature type="chain" id="PRO_0000217787" description="Circadian clock protein KaiC2">
    <location>
        <begin position="1"/>
        <end position="568"/>
    </location>
</feature>
<feature type="domain" description="KaiC 1" evidence="1">
    <location>
        <begin position="11"/>
        <end position="250"/>
    </location>
</feature>
<feature type="domain" description="KaiC 2" evidence="1">
    <location>
        <begin position="251"/>
        <end position="485"/>
    </location>
</feature>
<feature type="modified residue" description="Phosphoserine; by autocatalysis" evidence="7">
    <location>
        <position position="423"/>
    </location>
</feature>
<feature type="modified residue" description="Phosphoserine; by autocatalysis" evidence="7">
    <location>
        <position position="424"/>
    </location>
</feature>
<gene>
    <name evidence="4 5" type="primary">kaiC2</name>
    <name type="ordered locus">sll1595</name>
</gene>
<organism>
    <name type="scientific">Synechocystis sp. (strain ATCC 27184 / PCC 6803 / Kazusa)</name>
    <dbReference type="NCBI Taxonomy" id="1111708"/>
    <lineage>
        <taxon>Bacteria</taxon>
        <taxon>Bacillati</taxon>
        <taxon>Cyanobacteriota</taxon>
        <taxon>Cyanophyceae</taxon>
        <taxon>Synechococcales</taxon>
        <taxon>Merismopediaceae</taxon>
        <taxon>Synechocystis</taxon>
    </lineage>
</organism>
<proteinExistence type="evidence at protein level"/>